<dbReference type="EMBL" id="AY954394">
    <property type="protein sequence ID" value="AAX40652.1"/>
    <property type="molecule type" value="Genomic_DNA"/>
</dbReference>
<dbReference type="EMBL" id="AL662988">
    <property type="protein sequence ID" value="CAE04243.3"/>
    <property type="molecule type" value="Genomic_DNA"/>
</dbReference>
<dbReference type="EMBL" id="AP014960">
    <property type="protein sequence ID" value="BAS91138.1"/>
    <property type="molecule type" value="Genomic_DNA"/>
</dbReference>
<dbReference type="EMBL" id="CM000141">
    <property type="protein sequence ID" value="EAZ32071.1"/>
    <property type="molecule type" value="Genomic_DNA"/>
</dbReference>
<dbReference type="EMBL" id="D12776">
    <property type="protein sequence ID" value="BAA02241.1"/>
    <property type="molecule type" value="mRNA"/>
</dbReference>
<dbReference type="RefSeq" id="XP_015636008.1">
    <property type="nucleotide sequence ID" value="XM_015780522.1"/>
</dbReference>
<dbReference type="RefSeq" id="XP_015636009.1">
    <property type="nucleotide sequence ID" value="XM_015780523.1"/>
</dbReference>
<dbReference type="SMR" id="Q58G87"/>
<dbReference type="FunCoup" id="Q58G87">
    <property type="interactions" value="102"/>
</dbReference>
<dbReference type="STRING" id="39947.Q58G87"/>
<dbReference type="PaxDb" id="39947-Q58G87"/>
<dbReference type="EnsemblPlants" id="Os04t0628100-02">
    <property type="protein sequence ID" value="Os04t0628100-02"/>
    <property type="gene ID" value="Os04g0628100"/>
</dbReference>
<dbReference type="Gramene" id="Os04t0628100-02">
    <property type="protein sequence ID" value="Os04t0628100-02"/>
    <property type="gene ID" value="Os04g0628100"/>
</dbReference>
<dbReference type="eggNOG" id="KOG0001">
    <property type="taxonomic scope" value="Eukaryota"/>
</dbReference>
<dbReference type="HOGENOM" id="CLU_010412_7_0_1"/>
<dbReference type="InParanoid" id="Q58G87"/>
<dbReference type="OrthoDB" id="727549at2759"/>
<dbReference type="Proteomes" id="UP000000763">
    <property type="component" value="Chromosome 4"/>
</dbReference>
<dbReference type="Proteomes" id="UP000007752">
    <property type="component" value="Chromosome 4"/>
</dbReference>
<dbReference type="Proteomes" id="UP000059680">
    <property type="component" value="Chromosome 4"/>
</dbReference>
<dbReference type="ExpressionAtlas" id="Q58G87">
    <property type="expression patterns" value="baseline and differential"/>
</dbReference>
<dbReference type="GO" id="GO:0005737">
    <property type="term" value="C:cytoplasm"/>
    <property type="evidence" value="ECO:0000318"/>
    <property type="project" value="GO_Central"/>
</dbReference>
<dbReference type="GO" id="GO:0005634">
    <property type="term" value="C:nucleus"/>
    <property type="evidence" value="ECO:0000318"/>
    <property type="project" value="GO_Central"/>
</dbReference>
<dbReference type="GO" id="GO:0003729">
    <property type="term" value="F:mRNA binding"/>
    <property type="evidence" value="ECO:0007669"/>
    <property type="project" value="UniProtKB-ARBA"/>
</dbReference>
<dbReference type="GO" id="GO:0031386">
    <property type="term" value="F:protein tag activity"/>
    <property type="evidence" value="ECO:0000318"/>
    <property type="project" value="GO_Central"/>
</dbReference>
<dbReference type="GO" id="GO:0031625">
    <property type="term" value="F:ubiquitin protein ligase binding"/>
    <property type="evidence" value="ECO:0000318"/>
    <property type="project" value="GO_Central"/>
</dbReference>
<dbReference type="GO" id="GO:0019941">
    <property type="term" value="P:modification-dependent protein catabolic process"/>
    <property type="evidence" value="ECO:0000318"/>
    <property type="project" value="GO_Central"/>
</dbReference>
<dbReference type="GO" id="GO:0016567">
    <property type="term" value="P:protein ubiquitination"/>
    <property type="evidence" value="ECO:0000318"/>
    <property type="project" value="GO_Central"/>
</dbReference>
<dbReference type="CDD" id="cd01803">
    <property type="entry name" value="Ubl_ubiquitin"/>
    <property type="match status" value="5"/>
</dbReference>
<dbReference type="FunFam" id="3.10.20.90:FF:000016">
    <property type="entry name" value="Polyubiquitin 3"/>
    <property type="match status" value="5"/>
</dbReference>
<dbReference type="Gene3D" id="3.10.20.90">
    <property type="entry name" value="Phosphatidylinositol 3-kinase Catalytic Subunit, Chain A, domain 1"/>
    <property type="match status" value="5"/>
</dbReference>
<dbReference type="InterPro" id="IPR000626">
    <property type="entry name" value="Ubiquitin-like_dom"/>
</dbReference>
<dbReference type="InterPro" id="IPR029071">
    <property type="entry name" value="Ubiquitin-like_domsf"/>
</dbReference>
<dbReference type="InterPro" id="IPR019954">
    <property type="entry name" value="Ubiquitin_CS"/>
</dbReference>
<dbReference type="InterPro" id="IPR019956">
    <property type="entry name" value="Ubiquitin_dom"/>
</dbReference>
<dbReference type="InterPro" id="IPR050158">
    <property type="entry name" value="Ubiquitin_ubiquitin-like"/>
</dbReference>
<dbReference type="PANTHER" id="PTHR10666">
    <property type="entry name" value="UBIQUITIN"/>
    <property type="match status" value="1"/>
</dbReference>
<dbReference type="Pfam" id="PF00240">
    <property type="entry name" value="ubiquitin"/>
    <property type="match status" value="5"/>
</dbReference>
<dbReference type="PRINTS" id="PR00348">
    <property type="entry name" value="UBIQUITIN"/>
</dbReference>
<dbReference type="SMART" id="SM00213">
    <property type="entry name" value="UBQ"/>
    <property type="match status" value="5"/>
</dbReference>
<dbReference type="SUPFAM" id="SSF54236">
    <property type="entry name" value="Ubiquitin-like"/>
    <property type="match status" value="5"/>
</dbReference>
<dbReference type="PROSITE" id="PS00299">
    <property type="entry name" value="UBIQUITIN_1"/>
    <property type="match status" value="5"/>
</dbReference>
<dbReference type="PROSITE" id="PS50053">
    <property type="entry name" value="UBIQUITIN_2"/>
    <property type="match status" value="5"/>
</dbReference>
<sequence length="381" mass="42725">MQIFVKTLTGKTITLEVEFSDTIDNVKAKIQDKEGIPPDQQRLIFAGKQLEDGRTLADYNIQKESTLHLVLRLRGGMQIFVKTLTGKTITLEVESSDTIDNVKAKIQDKEGIPPDQQRLIFAGKQLEDGRTLADYNIQKESTLHLVLRLRGGMQIFVKTLTGKTITLEVESSDTIDNVKAKIQDKEGIPPDQQRLIFAGKQLEDGRTLADYNIQKESTLHLVLRLRGGMQIFVKTLTGKTITLEVESSDTIDNVKAKIQDKEGIPPDQQRLIFAGKQLEDGRTLADYNIQKESTLHLVLRLRGGMQIFVKTLTGKTITLEVESSDTIDNVKAKIQDKEGIPPDQQRLIFAGKQLEDGRTLADYNIQKESTLHLVLRLRGGL</sequence>
<protein>
    <recommendedName>
        <fullName>Polyubiquitin 3</fullName>
    </recommendedName>
    <component>
        <recommendedName>
            <fullName>Ubiquitin-related</fullName>
        </recommendedName>
    </component>
    <component>
        <recommendedName>
            <fullName>Ubiquitin</fullName>
        </recommendedName>
    </component>
</protein>
<name>UBQ3_ORYSJ</name>
<reference key="1">
    <citation type="journal article" date="2006" name="Plant Mol. Biol.">
        <title>Expression enhancement of a rice polyubiquitin gene promoter.</title>
        <authorList>
            <person name="Sivamani E."/>
            <person name="Qu R."/>
        </authorList>
    </citation>
    <scope>NUCLEOTIDE SEQUENCE [GENOMIC DNA]</scope>
    <source>
        <strain>cv. Nipponbare</strain>
    </source>
</reference>
<reference key="2">
    <citation type="journal article" date="2002" name="Nature">
        <title>Sequence and analysis of rice chromosome 4.</title>
        <authorList>
            <person name="Feng Q."/>
            <person name="Zhang Y."/>
            <person name="Hao P."/>
            <person name="Wang S."/>
            <person name="Fu G."/>
            <person name="Huang Y."/>
            <person name="Li Y."/>
            <person name="Zhu J."/>
            <person name="Liu Y."/>
            <person name="Hu X."/>
            <person name="Jia P."/>
            <person name="Zhang Y."/>
            <person name="Zhao Q."/>
            <person name="Ying K."/>
            <person name="Yu S."/>
            <person name="Tang Y."/>
            <person name="Weng Q."/>
            <person name="Zhang L."/>
            <person name="Lu Y."/>
            <person name="Mu J."/>
            <person name="Lu Y."/>
            <person name="Zhang L.S."/>
            <person name="Yu Z."/>
            <person name="Fan D."/>
            <person name="Liu X."/>
            <person name="Lu T."/>
            <person name="Li C."/>
            <person name="Wu Y."/>
            <person name="Sun T."/>
            <person name="Lei H."/>
            <person name="Li T."/>
            <person name="Hu H."/>
            <person name="Guan J."/>
            <person name="Wu M."/>
            <person name="Zhang R."/>
            <person name="Zhou B."/>
            <person name="Chen Z."/>
            <person name="Chen L."/>
            <person name="Jin Z."/>
            <person name="Wang R."/>
            <person name="Yin H."/>
            <person name="Cai Z."/>
            <person name="Ren S."/>
            <person name="Lv G."/>
            <person name="Gu W."/>
            <person name="Zhu G."/>
            <person name="Tu Y."/>
            <person name="Jia J."/>
            <person name="Zhang Y."/>
            <person name="Chen J."/>
            <person name="Kang H."/>
            <person name="Chen X."/>
            <person name="Shao C."/>
            <person name="Sun Y."/>
            <person name="Hu Q."/>
            <person name="Zhang X."/>
            <person name="Zhang W."/>
            <person name="Wang L."/>
            <person name="Ding C."/>
            <person name="Sheng H."/>
            <person name="Gu J."/>
            <person name="Chen S."/>
            <person name="Ni L."/>
            <person name="Zhu F."/>
            <person name="Chen W."/>
            <person name="Lan L."/>
            <person name="Lai Y."/>
            <person name="Cheng Z."/>
            <person name="Gu M."/>
            <person name="Jiang J."/>
            <person name="Li J."/>
            <person name="Hong G."/>
            <person name="Xue Y."/>
            <person name="Han B."/>
        </authorList>
    </citation>
    <scope>NUCLEOTIDE SEQUENCE [LARGE SCALE GENOMIC DNA]</scope>
    <source>
        <strain>cv. Nipponbare</strain>
    </source>
</reference>
<reference key="3">
    <citation type="journal article" date="2005" name="Nature">
        <title>The map-based sequence of the rice genome.</title>
        <authorList>
            <consortium name="International rice genome sequencing project (IRGSP)"/>
        </authorList>
    </citation>
    <scope>NUCLEOTIDE SEQUENCE [LARGE SCALE GENOMIC DNA]</scope>
    <source>
        <strain>cv. Nipponbare</strain>
    </source>
</reference>
<reference key="4">
    <citation type="journal article" date="2013" name="Rice">
        <title>Improvement of the Oryza sativa Nipponbare reference genome using next generation sequence and optical map data.</title>
        <authorList>
            <person name="Kawahara Y."/>
            <person name="de la Bastide M."/>
            <person name="Hamilton J.P."/>
            <person name="Kanamori H."/>
            <person name="McCombie W.R."/>
            <person name="Ouyang S."/>
            <person name="Schwartz D.C."/>
            <person name="Tanaka T."/>
            <person name="Wu J."/>
            <person name="Zhou S."/>
            <person name="Childs K.L."/>
            <person name="Davidson R.M."/>
            <person name="Lin H."/>
            <person name="Quesada-Ocampo L."/>
            <person name="Vaillancourt B."/>
            <person name="Sakai H."/>
            <person name="Lee S.S."/>
            <person name="Kim J."/>
            <person name="Numa H."/>
            <person name="Itoh T."/>
            <person name="Buell C.R."/>
            <person name="Matsumoto T."/>
        </authorList>
    </citation>
    <scope>GENOME REANNOTATION</scope>
    <source>
        <strain>cv. Nipponbare</strain>
    </source>
</reference>
<reference key="5">
    <citation type="journal article" date="2005" name="PLoS Biol.">
        <title>The genomes of Oryza sativa: a history of duplications.</title>
        <authorList>
            <person name="Yu J."/>
            <person name="Wang J."/>
            <person name="Lin W."/>
            <person name="Li S."/>
            <person name="Li H."/>
            <person name="Zhou J."/>
            <person name="Ni P."/>
            <person name="Dong W."/>
            <person name="Hu S."/>
            <person name="Zeng C."/>
            <person name="Zhang J."/>
            <person name="Zhang Y."/>
            <person name="Li R."/>
            <person name="Xu Z."/>
            <person name="Li S."/>
            <person name="Li X."/>
            <person name="Zheng H."/>
            <person name="Cong L."/>
            <person name="Lin L."/>
            <person name="Yin J."/>
            <person name="Geng J."/>
            <person name="Li G."/>
            <person name="Shi J."/>
            <person name="Liu J."/>
            <person name="Lv H."/>
            <person name="Li J."/>
            <person name="Wang J."/>
            <person name="Deng Y."/>
            <person name="Ran L."/>
            <person name="Shi X."/>
            <person name="Wang X."/>
            <person name="Wu Q."/>
            <person name="Li C."/>
            <person name="Ren X."/>
            <person name="Wang J."/>
            <person name="Wang X."/>
            <person name="Li D."/>
            <person name="Liu D."/>
            <person name="Zhang X."/>
            <person name="Ji Z."/>
            <person name="Zhao W."/>
            <person name="Sun Y."/>
            <person name="Zhang Z."/>
            <person name="Bao J."/>
            <person name="Han Y."/>
            <person name="Dong L."/>
            <person name="Ji J."/>
            <person name="Chen P."/>
            <person name="Wu S."/>
            <person name="Liu J."/>
            <person name="Xiao Y."/>
            <person name="Bu D."/>
            <person name="Tan J."/>
            <person name="Yang L."/>
            <person name="Ye C."/>
            <person name="Zhang J."/>
            <person name="Xu J."/>
            <person name="Zhou Y."/>
            <person name="Yu Y."/>
            <person name="Zhang B."/>
            <person name="Zhuang S."/>
            <person name="Wei H."/>
            <person name="Liu B."/>
            <person name="Lei M."/>
            <person name="Yu H."/>
            <person name="Li Y."/>
            <person name="Xu H."/>
            <person name="Wei S."/>
            <person name="He X."/>
            <person name="Fang L."/>
            <person name="Zhang Z."/>
            <person name="Zhang Y."/>
            <person name="Huang X."/>
            <person name="Su Z."/>
            <person name="Tong W."/>
            <person name="Li J."/>
            <person name="Tong Z."/>
            <person name="Li S."/>
            <person name="Ye J."/>
            <person name="Wang L."/>
            <person name="Fang L."/>
            <person name="Lei T."/>
            <person name="Chen C.-S."/>
            <person name="Chen H.-C."/>
            <person name="Xu Z."/>
            <person name="Li H."/>
            <person name="Huang H."/>
            <person name="Zhang F."/>
            <person name="Xu H."/>
            <person name="Li N."/>
            <person name="Zhao C."/>
            <person name="Li S."/>
            <person name="Dong L."/>
            <person name="Huang Y."/>
            <person name="Li L."/>
            <person name="Xi Y."/>
            <person name="Qi Q."/>
            <person name="Li W."/>
            <person name="Zhang B."/>
            <person name="Hu W."/>
            <person name="Zhang Y."/>
            <person name="Tian X."/>
            <person name="Jiao Y."/>
            <person name="Liang X."/>
            <person name="Jin J."/>
            <person name="Gao L."/>
            <person name="Zheng W."/>
            <person name="Hao B."/>
            <person name="Liu S.-M."/>
            <person name="Wang W."/>
            <person name="Yuan L."/>
            <person name="Cao M."/>
            <person name="McDermott J."/>
            <person name="Samudrala R."/>
            <person name="Wang J."/>
            <person name="Wong G.K.-S."/>
            <person name="Yang H."/>
        </authorList>
    </citation>
    <scope>NUCLEOTIDE SEQUENCE [LARGE SCALE GENOMIC DNA]</scope>
    <source>
        <strain>cv. Nipponbare</strain>
    </source>
</reference>
<reference key="6">
    <citation type="journal article" date="1993" name="Plant Mol. Biol.">
        <title>Isolation and characterization of a rice cDNA which encodes a ubiquitin protein and a 52 amino acid extension protein.</title>
        <authorList>
            <person name="Nishi P."/>
            <person name="Hashimoto H."/>
            <person name="Kidou S."/>
            <person name="Uchimiya H."/>
            <person name="Kato A."/>
        </authorList>
    </citation>
    <scope>NUCLEOTIDE SEQUENCE [MRNA] OF 193-381</scope>
    <source>
        <strain>cv. Yamahoushi</strain>
        <tissue>Callus</tissue>
    </source>
</reference>
<accession>Q58G87</accession>
<accession>A3AXN2</accession>
<accession>O82079</accession>
<accession>P03993</accession>
<accession>P69321</accession>
<accession>Q652Q2</accession>
<accession>Q67UR4</accession>
<accession>Q69P70</accession>
<accession>Q6ATC2</accession>
<accession>Q7XN78</accession>
<accession>Q8S5Y3</accession>
<accession>Q9AR09</accession>
<proteinExistence type="evidence at transcript level"/>
<evidence type="ECO:0000250" key="1"/>
<evidence type="ECO:0000255" key="2">
    <source>
        <dbReference type="PROSITE-ProRule" id="PRU00214"/>
    </source>
</evidence>
<evidence type="ECO:0000305" key="3"/>
<evidence type="ECO:0000312" key="4">
    <source>
        <dbReference type="EMBL" id="EAZ32071.1"/>
    </source>
</evidence>
<comment type="function">
    <text evidence="1">Ubiquitin exists either covalently attached to another protein, or free (unanchored). When covalently bound, it is conjugated to target proteins via an isopeptide bond either as a monomer (monoubiquitin), a polymer linked via different Lys residues of the ubiquitin (polyubiquitin chains) or a linear polymer linked via the initiator Met of the ubiquitin (linear polyubiquitin chains). Polyubiquitin chains, when attached to a target protein, have different functions depending on the Lys residue of the ubiquitin that is linked: Lys-48-linked is involved in protein degradation via the proteasome; Lys-63-linked is involved in endocytosis, and DNA-damage responses. Linear polymer chains formed via attachment by the initiator Met lead to cell signaling. Ubiquitin is usually conjugated to Lys residues of target proteins, however, in rare cases, conjugation to Cys or Ser residues has been observed. When polyubiquitin is free (unanchored-polyubiquitin), it also has distinct roles, such as in activation of protein kinases, and in signaling (By similarity).</text>
</comment>
<comment type="subcellular location">
    <molecule>Ubiquitin</molecule>
    <subcellularLocation>
        <location evidence="1">Cytoplasm</location>
    </subcellularLocation>
    <subcellularLocation>
        <location evidence="1">Nucleus</location>
    </subcellularLocation>
</comment>
<comment type="miscellaneous">
    <text>Ubiquitin is generally synthesized as a polyubiquitin precursor with tandem head to tail repeats. Often, there is one to three additional amino acids after the last repeat, removed in the mature protein. Alternatively, ubiquitin extension protein is synthesized as a single copy of ubiquitin fused to a ribosomal protein (either eL40 or eS31) or to an ubiquitin-related protein (either RUB1 or RUB2). Following translation, extension protein is cleaved from ubiquitin.</text>
</comment>
<comment type="miscellaneous">
    <text>For the sake of clarity sequence features are annotated only for the first chain, and are not repeated for each of the following chains.</text>
</comment>
<comment type="similarity">
    <text evidence="3">Belongs to the ubiquitin family.</text>
</comment>
<keyword id="KW-0963">Cytoplasm</keyword>
<keyword id="KW-1017">Isopeptide bond</keyword>
<keyword id="KW-0539">Nucleus</keyword>
<keyword id="KW-1185">Reference proteome</keyword>
<keyword id="KW-0677">Repeat</keyword>
<keyword id="KW-0832">Ubl conjugation</keyword>
<keyword id="KW-0833">Ubl conjugation pathway</keyword>
<gene>
    <name type="primary">UBQ3</name>
    <name type="synonym">RUBI3</name>
    <name type="ordered locus">Os04g0628100</name>
    <name type="ordered locus">LOC_Os04g53620</name>
    <name evidence="4" type="ORF">OsJ_16259</name>
    <name type="ORF">OSJNBa0089N06.4</name>
</gene>
<feature type="chain" id="PRO_0000396904" description="Ubiquitin-related">
    <location>
        <begin position="1"/>
        <end position="76"/>
    </location>
</feature>
<feature type="chain" id="PRO_0000396905" description="Ubiquitin">
    <location>
        <begin position="77"/>
        <end position="152"/>
    </location>
</feature>
<feature type="chain" id="PRO_0000396906" description="Ubiquitin">
    <location>
        <begin position="153"/>
        <end position="228"/>
    </location>
</feature>
<feature type="chain" id="PRO_0000396907" description="Ubiquitin">
    <location>
        <begin position="229"/>
        <end position="304"/>
    </location>
</feature>
<feature type="chain" id="PRO_0000396908" description="Ubiquitin">
    <location>
        <begin position="305"/>
        <end position="380"/>
    </location>
</feature>
<feature type="propeptide" id="PRO_0000396909" evidence="3">
    <location>
        <position position="381"/>
    </location>
</feature>
<feature type="domain" description="Ubiquitin-like 1" evidence="2">
    <location>
        <begin position="1"/>
        <end position="76"/>
    </location>
</feature>
<feature type="domain" description="Ubiquitin-like 2" evidence="2">
    <location>
        <begin position="77"/>
        <end position="152"/>
    </location>
</feature>
<feature type="domain" description="Ubiquitin-like 3" evidence="2">
    <location>
        <begin position="153"/>
        <end position="228"/>
    </location>
</feature>
<feature type="domain" description="Ubiquitin-like 4" evidence="2">
    <location>
        <begin position="229"/>
        <end position="304"/>
    </location>
</feature>
<feature type="domain" description="Ubiquitin-like 5" evidence="2">
    <location>
        <begin position="305"/>
        <end position="380"/>
    </location>
</feature>
<feature type="cross-link" description="Glycyl lysine isopeptide (Lys-Gly) (interchain with G-Cter in ubiquitin)" evidence="1">
    <location>
        <position position="48"/>
    </location>
</feature>
<feature type="cross-link" description="Glycyl lysine isopeptide (Lys-Gly) (interchain with G-Cter in ubiquitin)" evidence="1">
    <location>
        <position position="63"/>
    </location>
</feature>
<feature type="cross-link" description="Glycyl lysine isopeptide (Gly-Lys) (interchain with K-? in acceptor proteins)" evidence="2">
    <location>
        <position position="76"/>
    </location>
</feature>
<organism>
    <name type="scientific">Oryza sativa subsp. japonica</name>
    <name type="common">Rice</name>
    <dbReference type="NCBI Taxonomy" id="39947"/>
    <lineage>
        <taxon>Eukaryota</taxon>
        <taxon>Viridiplantae</taxon>
        <taxon>Streptophyta</taxon>
        <taxon>Embryophyta</taxon>
        <taxon>Tracheophyta</taxon>
        <taxon>Spermatophyta</taxon>
        <taxon>Magnoliopsida</taxon>
        <taxon>Liliopsida</taxon>
        <taxon>Poales</taxon>
        <taxon>Poaceae</taxon>
        <taxon>BOP clade</taxon>
        <taxon>Oryzoideae</taxon>
        <taxon>Oryzeae</taxon>
        <taxon>Oryzinae</taxon>
        <taxon>Oryza</taxon>
        <taxon>Oryza sativa</taxon>
    </lineage>
</organism>